<reference key="1">
    <citation type="journal article" date="2007" name="DNA Res.">
        <title>Complete genomic structure of the bloom-forming toxic cyanobacterium Microcystis aeruginosa NIES-843.</title>
        <authorList>
            <person name="Kaneko T."/>
            <person name="Nakajima N."/>
            <person name="Okamoto S."/>
            <person name="Suzuki I."/>
            <person name="Tanabe Y."/>
            <person name="Tamaoki M."/>
            <person name="Nakamura Y."/>
            <person name="Kasai F."/>
            <person name="Watanabe A."/>
            <person name="Kawashima K."/>
            <person name="Kishida Y."/>
            <person name="Ono A."/>
            <person name="Shimizu Y."/>
            <person name="Takahashi C."/>
            <person name="Minami C."/>
            <person name="Fujishiro T."/>
            <person name="Kohara M."/>
            <person name="Katoh M."/>
            <person name="Nakazaki N."/>
            <person name="Nakayama S."/>
            <person name="Yamada M."/>
            <person name="Tabata S."/>
            <person name="Watanabe M.M."/>
        </authorList>
    </citation>
    <scope>NUCLEOTIDE SEQUENCE [LARGE SCALE GENOMIC DNA]</scope>
    <source>
        <strain>NIES-843 / IAM M-247</strain>
    </source>
</reference>
<name>IF3_MICAN</name>
<organism>
    <name type="scientific">Microcystis aeruginosa (strain NIES-843 / IAM M-2473)</name>
    <dbReference type="NCBI Taxonomy" id="449447"/>
    <lineage>
        <taxon>Bacteria</taxon>
        <taxon>Bacillati</taxon>
        <taxon>Cyanobacteriota</taxon>
        <taxon>Cyanophyceae</taxon>
        <taxon>Oscillatoriophycideae</taxon>
        <taxon>Chroococcales</taxon>
        <taxon>Microcystaceae</taxon>
        <taxon>Microcystis</taxon>
    </lineage>
</organism>
<dbReference type="EMBL" id="AP009552">
    <property type="protein sequence ID" value="BAG02840.1"/>
    <property type="molecule type" value="Genomic_DNA"/>
</dbReference>
<dbReference type="RefSeq" id="WP_002797889.1">
    <property type="nucleotide sequence ID" value="NC_010296.1"/>
</dbReference>
<dbReference type="SMR" id="B0JKQ1"/>
<dbReference type="STRING" id="449447.MAE_30180"/>
<dbReference type="PaxDb" id="449447-MAE_30180"/>
<dbReference type="EnsemblBacteria" id="BAG02840">
    <property type="protein sequence ID" value="BAG02840"/>
    <property type="gene ID" value="MAE_30180"/>
</dbReference>
<dbReference type="KEGG" id="mar:MAE_30180"/>
<dbReference type="eggNOG" id="COG0290">
    <property type="taxonomic scope" value="Bacteria"/>
</dbReference>
<dbReference type="HOGENOM" id="CLU_054919_3_2_3"/>
<dbReference type="BioCyc" id="MAER449447:MAE_RS13170-MONOMER"/>
<dbReference type="Proteomes" id="UP000001510">
    <property type="component" value="Chromosome"/>
</dbReference>
<dbReference type="GO" id="GO:0005829">
    <property type="term" value="C:cytosol"/>
    <property type="evidence" value="ECO:0007669"/>
    <property type="project" value="TreeGrafter"/>
</dbReference>
<dbReference type="GO" id="GO:0016020">
    <property type="term" value="C:membrane"/>
    <property type="evidence" value="ECO:0007669"/>
    <property type="project" value="TreeGrafter"/>
</dbReference>
<dbReference type="GO" id="GO:0043022">
    <property type="term" value="F:ribosome binding"/>
    <property type="evidence" value="ECO:0007669"/>
    <property type="project" value="TreeGrafter"/>
</dbReference>
<dbReference type="GO" id="GO:0003743">
    <property type="term" value="F:translation initiation factor activity"/>
    <property type="evidence" value="ECO:0007669"/>
    <property type="project" value="UniProtKB-UniRule"/>
</dbReference>
<dbReference type="GO" id="GO:0032790">
    <property type="term" value="P:ribosome disassembly"/>
    <property type="evidence" value="ECO:0007669"/>
    <property type="project" value="TreeGrafter"/>
</dbReference>
<dbReference type="FunFam" id="3.10.20.80:FF:000001">
    <property type="entry name" value="Translation initiation factor IF-3"/>
    <property type="match status" value="1"/>
</dbReference>
<dbReference type="FunFam" id="3.30.110.10:FF:000001">
    <property type="entry name" value="Translation initiation factor IF-3"/>
    <property type="match status" value="1"/>
</dbReference>
<dbReference type="Gene3D" id="3.30.110.10">
    <property type="entry name" value="Translation initiation factor 3 (IF-3), C-terminal domain"/>
    <property type="match status" value="1"/>
</dbReference>
<dbReference type="Gene3D" id="3.10.20.80">
    <property type="entry name" value="Translation initiation factor 3 (IF-3), N-terminal domain"/>
    <property type="match status" value="1"/>
</dbReference>
<dbReference type="HAMAP" id="MF_00080">
    <property type="entry name" value="IF_3"/>
    <property type="match status" value="1"/>
</dbReference>
<dbReference type="InterPro" id="IPR036788">
    <property type="entry name" value="T_IF-3_C_sf"/>
</dbReference>
<dbReference type="InterPro" id="IPR036787">
    <property type="entry name" value="T_IF-3_N_sf"/>
</dbReference>
<dbReference type="InterPro" id="IPR019813">
    <property type="entry name" value="Translation_initiation_fac3_CS"/>
</dbReference>
<dbReference type="InterPro" id="IPR001288">
    <property type="entry name" value="Translation_initiation_fac_3"/>
</dbReference>
<dbReference type="InterPro" id="IPR019815">
    <property type="entry name" value="Translation_initiation_fac_3_C"/>
</dbReference>
<dbReference type="InterPro" id="IPR019814">
    <property type="entry name" value="Translation_initiation_fac_3_N"/>
</dbReference>
<dbReference type="NCBIfam" id="TIGR00168">
    <property type="entry name" value="infC"/>
    <property type="match status" value="1"/>
</dbReference>
<dbReference type="PANTHER" id="PTHR10938">
    <property type="entry name" value="TRANSLATION INITIATION FACTOR IF-3"/>
    <property type="match status" value="1"/>
</dbReference>
<dbReference type="PANTHER" id="PTHR10938:SF0">
    <property type="entry name" value="TRANSLATION INITIATION FACTOR IF-3, MITOCHONDRIAL"/>
    <property type="match status" value="1"/>
</dbReference>
<dbReference type="Pfam" id="PF00707">
    <property type="entry name" value="IF3_C"/>
    <property type="match status" value="1"/>
</dbReference>
<dbReference type="Pfam" id="PF05198">
    <property type="entry name" value="IF3_N"/>
    <property type="match status" value="1"/>
</dbReference>
<dbReference type="SUPFAM" id="SSF55200">
    <property type="entry name" value="Translation initiation factor IF3, C-terminal domain"/>
    <property type="match status" value="1"/>
</dbReference>
<dbReference type="SUPFAM" id="SSF54364">
    <property type="entry name" value="Translation initiation factor IF3, N-terminal domain"/>
    <property type="match status" value="1"/>
</dbReference>
<dbReference type="PROSITE" id="PS00938">
    <property type="entry name" value="IF3"/>
    <property type="match status" value="1"/>
</dbReference>
<comment type="function">
    <text evidence="1">IF-3 binds to the 30S ribosomal subunit and shifts the equilibrium between 70S ribosomes and their 50S and 30S subunits in favor of the free subunits, thus enhancing the availability of 30S subunits on which protein synthesis initiation begins.</text>
</comment>
<comment type="subunit">
    <text evidence="1">Monomer.</text>
</comment>
<comment type="subcellular location">
    <subcellularLocation>
        <location evidence="1">Cytoplasm</location>
    </subcellularLocation>
</comment>
<comment type="similarity">
    <text evidence="1">Belongs to the IF-3 family.</text>
</comment>
<sequence length="176" mass="20439">MIDKRRTTRDLPQINERIRFPEIRVIDSDGSQLGIITPAEALRVAEEKELDLVLVSETASPPVCRIMDYGKYKFEQEKKAREAKKKQHTADIKEVKMRYKIDEHDYNVRVNQAQRFLKAGDKVKATITFRGREIQHSNLAEELLARMAKDLQDVAEVQQAPKKEGRNMMMMLSPKK</sequence>
<accession>B0JKQ1</accession>
<keyword id="KW-0963">Cytoplasm</keyword>
<keyword id="KW-0396">Initiation factor</keyword>
<keyword id="KW-0648">Protein biosynthesis</keyword>
<protein>
    <recommendedName>
        <fullName evidence="1">Translation initiation factor IF-3</fullName>
    </recommendedName>
</protein>
<proteinExistence type="inferred from homology"/>
<feature type="chain" id="PRO_1000075273" description="Translation initiation factor IF-3">
    <location>
        <begin position="1"/>
        <end position="176"/>
    </location>
</feature>
<gene>
    <name evidence="1" type="primary">infC</name>
    <name type="ordered locus">MAE_30180</name>
</gene>
<evidence type="ECO:0000255" key="1">
    <source>
        <dbReference type="HAMAP-Rule" id="MF_00080"/>
    </source>
</evidence>